<feature type="chain" id="PRO_0000053887" description="Pleckstrin homology domain-containing family B member 1">
    <location>
        <begin position="1"/>
        <end position="243"/>
    </location>
</feature>
<feature type="domain" description="PH" evidence="2">
    <location>
        <begin position="21"/>
        <end position="128"/>
    </location>
</feature>
<feature type="splice variant" id="VSP_009781" description="In isoform 3 and isoform 4." evidence="7 8">
    <location>
        <begin position="1"/>
        <end position="19"/>
    </location>
</feature>
<feature type="splice variant" id="VSP_009782" description="In isoform 2 and isoform 4." evidence="7 8">
    <location>
        <begin position="131"/>
        <end position="165"/>
    </location>
</feature>
<feature type="strand" evidence="9">
    <location>
        <begin position="22"/>
        <end position="31"/>
    </location>
</feature>
<feature type="strand" evidence="9">
    <location>
        <begin position="33"/>
        <end position="35"/>
    </location>
</feature>
<feature type="strand" evidence="9">
    <location>
        <begin position="38"/>
        <end position="46"/>
    </location>
</feature>
<feature type="turn" evidence="9">
    <location>
        <begin position="47"/>
        <end position="49"/>
    </location>
</feature>
<feature type="strand" evidence="9">
    <location>
        <begin position="50"/>
        <end position="58"/>
    </location>
</feature>
<feature type="strand" evidence="9">
    <location>
        <begin position="60"/>
        <end position="67"/>
    </location>
</feature>
<feature type="turn" evidence="9">
    <location>
        <begin position="69"/>
        <end position="71"/>
    </location>
</feature>
<feature type="strand" evidence="9">
    <location>
        <begin position="72"/>
        <end position="77"/>
    </location>
</feature>
<feature type="helix" evidence="9">
    <location>
        <begin position="78"/>
        <end position="80"/>
    </location>
</feature>
<feature type="turn" evidence="9">
    <location>
        <begin position="92"/>
        <end position="94"/>
    </location>
</feature>
<feature type="strand" evidence="9">
    <location>
        <begin position="95"/>
        <end position="100"/>
    </location>
</feature>
<feature type="strand" evidence="9">
    <location>
        <begin position="105"/>
        <end position="109"/>
    </location>
</feature>
<feature type="helix" evidence="9">
    <location>
        <begin position="113"/>
        <end position="127"/>
    </location>
</feature>
<keyword id="KW-0002">3D-structure</keyword>
<keyword id="KW-0025">Alternative splicing</keyword>
<keyword id="KW-0963">Cytoplasm</keyword>
<keyword id="KW-0217">Developmental protein</keyword>
<keyword id="KW-0472">Membrane</keyword>
<keyword id="KW-1185">Reference proteome</keyword>
<name>PKHB1_MOUSE</name>
<organism>
    <name type="scientific">Mus musculus</name>
    <name type="common">Mouse</name>
    <dbReference type="NCBI Taxonomy" id="10090"/>
    <lineage>
        <taxon>Eukaryota</taxon>
        <taxon>Metazoa</taxon>
        <taxon>Chordata</taxon>
        <taxon>Craniata</taxon>
        <taxon>Vertebrata</taxon>
        <taxon>Euteleostomi</taxon>
        <taxon>Mammalia</taxon>
        <taxon>Eutheria</taxon>
        <taxon>Euarchontoglires</taxon>
        <taxon>Glires</taxon>
        <taxon>Rodentia</taxon>
        <taxon>Myomorpha</taxon>
        <taxon>Muroidea</taxon>
        <taxon>Muridae</taxon>
        <taxon>Murinae</taxon>
        <taxon>Mus</taxon>
        <taxon>Mus</taxon>
    </lineage>
</organism>
<evidence type="ECO:0000250" key="1">
    <source>
        <dbReference type="UniProtKB" id="Q9UF11"/>
    </source>
</evidence>
<evidence type="ECO:0000255" key="2">
    <source>
        <dbReference type="PROSITE-ProRule" id="PRU00145"/>
    </source>
</evidence>
<evidence type="ECO:0000269" key="3">
    <source>
    </source>
</evidence>
<evidence type="ECO:0000269" key="4">
    <source>
    </source>
</evidence>
<evidence type="ECO:0000269" key="5">
    <source>
    </source>
</evidence>
<evidence type="ECO:0000269" key="6">
    <source>
    </source>
</evidence>
<evidence type="ECO:0000303" key="7">
    <source>
    </source>
</evidence>
<evidence type="ECO:0000303" key="8">
    <source>
    </source>
</evidence>
<evidence type="ECO:0007829" key="9">
    <source>
        <dbReference type="PDB" id="2D9V"/>
    </source>
</evidence>
<dbReference type="EMBL" id="AF071000">
    <property type="protein sequence ID" value="AAD32952.1"/>
    <property type="molecule type" value="mRNA"/>
</dbReference>
<dbReference type="EMBL" id="AF000272">
    <property type="protein sequence ID" value="AAF16676.1"/>
    <property type="molecule type" value="mRNA"/>
</dbReference>
<dbReference type="EMBL" id="AF071001">
    <property type="protein sequence ID" value="AAF16683.1"/>
    <property type="status" value="ALT_TERM"/>
    <property type="molecule type" value="Genomic_DNA"/>
</dbReference>
<dbReference type="EMBL" id="AF101053">
    <property type="protein sequence ID" value="AAF18571.1"/>
    <property type="molecule type" value="mRNA"/>
</dbReference>
<dbReference type="EMBL" id="AF100613">
    <property type="protein sequence ID" value="AAF18933.1"/>
    <property type="molecule type" value="mRNA"/>
</dbReference>
<dbReference type="EMBL" id="AK005102">
    <property type="protein sequence ID" value="BAB23819.1"/>
    <property type="molecule type" value="mRNA"/>
</dbReference>
<dbReference type="EMBL" id="BC024756">
    <property type="protein sequence ID" value="AAH24756.1"/>
    <property type="molecule type" value="mRNA"/>
</dbReference>
<dbReference type="CCDS" id="CCDS21504.1">
    <molecule id="Q9QYE9-1"/>
</dbReference>
<dbReference type="CCDS" id="CCDS52324.1">
    <molecule id="Q9QYE9-4"/>
</dbReference>
<dbReference type="CCDS" id="CCDS52325.1">
    <molecule id="Q9QYE9-3"/>
</dbReference>
<dbReference type="CCDS" id="CCDS52326.1">
    <molecule id="Q9QYE9-2"/>
</dbReference>
<dbReference type="RefSeq" id="NP_001156654.1">
    <molecule id="Q9QYE9-2"/>
    <property type="nucleotide sequence ID" value="NM_001163182.1"/>
</dbReference>
<dbReference type="RefSeq" id="NP_001156655.1">
    <molecule id="Q9QYE9-3"/>
    <property type="nucleotide sequence ID" value="NM_001163183.1"/>
</dbReference>
<dbReference type="RefSeq" id="NP_001156656.1">
    <molecule id="Q9QYE9-4"/>
    <property type="nucleotide sequence ID" value="NM_001163184.1"/>
</dbReference>
<dbReference type="RefSeq" id="NP_001156657.1">
    <molecule id="Q9QYE9-4"/>
    <property type="nucleotide sequence ID" value="NM_001163185.1"/>
</dbReference>
<dbReference type="RefSeq" id="NP_001156658.1">
    <molecule id="Q9QYE9-3"/>
    <property type="nucleotide sequence ID" value="NM_001163186.1"/>
</dbReference>
<dbReference type="RefSeq" id="NP_001156659.1">
    <molecule id="Q9QYE9-4"/>
    <property type="nucleotide sequence ID" value="NM_001163187.1"/>
</dbReference>
<dbReference type="RefSeq" id="NP_001278265.1">
    <property type="nucleotide sequence ID" value="NM_001291336.1"/>
</dbReference>
<dbReference type="RefSeq" id="NP_038774.1">
    <molecule id="Q9QYE9-1"/>
    <property type="nucleotide sequence ID" value="NM_013746.3"/>
</dbReference>
<dbReference type="RefSeq" id="XP_006507969.1">
    <molecule id="Q9QYE9-3"/>
    <property type="nucleotide sequence ID" value="XM_006507906.2"/>
</dbReference>
<dbReference type="RefSeq" id="XP_036009040.1">
    <molecule id="Q9QYE9-4"/>
    <property type="nucleotide sequence ID" value="XM_036153147.1"/>
</dbReference>
<dbReference type="PDB" id="2D9V">
    <property type="method" value="NMR"/>
    <property type="chains" value="A=22-138"/>
</dbReference>
<dbReference type="PDBsum" id="2D9V"/>
<dbReference type="SMR" id="Q9QYE9"/>
<dbReference type="BioGRID" id="205156">
    <property type="interactions" value="10"/>
</dbReference>
<dbReference type="FunCoup" id="Q9QYE9">
    <property type="interactions" value="237"/>
</dbReference>
<dbReference type="IntAct" id="Q9QYE9">
    <property type="interactions" value="2"/>
</dbReference>
<dbReference type="MINT" id="Q9QYE9"/>
<dbReference type="STRING" id="10090.ENSMUSP00000078175"/>
<dbReference type="iPTMnet" id="Q9QYE9"/>
<dbReference type="PhosphoSitePlus" id="Q9QYE9"/>
<dbReference type="SwissPalm" id="Q9QYE9"/>
<dbReference type="PaxDb" id="10090-ENSMUSP00000078175"/>
<dbReference type="ProteomicsDB" id="289504">
    <molecule id="Q9QYE9-1"/>
</dbReference>
<dbReference type="ProteomicsDB" id="289505">
    <molecule id="Q9QYE9-2"/>
</dbReference>
<dbReference type="ProteomicsDB" id="289506">
    <molecule id="Q9QYE9-3"/>
</dbReference>
<dbReference type="ProteomicsDB" id="289507">
    <molecule id="Q9QYE9-4"/>
</dbReference>
<dbReference type="Antibodypedia" id="30966">
    <property type="antibodies" value="46 antibodies from 22 providers"/>
</dbReference>
<dbReference type="DNASU" id="27276"/>
<dbReference type="Ensembl" id="ENSMUST00000079176.14">
    <molecule id="Q9QYE9-1"/>
    <property type="protein sequence ID" value="ENSMUSP00000078175.7"/>
    <property type="gene ID" value="ENSMUSG00000030701.18"/>
</dbReference>
<dbReference type="Ensembl" id="ENSMUST00000107044.10">
    <molecule id="Q9QYE9-4"/>
    <property type="protein sequence ID" value="ENSMUSP00000102659.4"/>
    <property type="gene ID" value="ENSMUSG00000030701.18"/>
</dbReference>
<dbReference type="Ensembl" id="ENSMUST00000107045.9">
    <molecule id="Q9QYE9-3"/>
    <property type="protein sequence ID" value="ENSMUSP00000102660.2"/>
    <property type="gene ID" value="ENSMUSG00000030701.18"/>
</dbReference>
<dbReference type="Ensembl" id="ENSMUST00000107046.8">
    <molecule id="Q9QYE9-4"/>
    <property type="protein sequence ID" value="ENSMUSP00000102661.2"/>
    <property type="gene ID" value="ENSMUSG00000030701.18"/>
</dbReference>
<dbReference type="Ensembl" id="ENSMUST00000107047.10">
    <molecule id="Q9QYE9-2"/>
    <property type="protein sequence ID" value="ENSMUSP00000102662.3"/>
    <property type="gene ID" value="ENSMUSG00000030701.18"/>
</dbReference>
<dbReference type="Ensembl" id="ENSMUST00000116287.9">
    <molecule id="Q9QYE9-3"/>
    <property type="protein sequence ID" value="ENSMUSP00000111991.3"/>
    <property type="gene ID" value="ENSMUSG00000030701.18"/>
</dbReference>
<dbReference type="GeneID" id="27276"/>
<dbReference type="KEGG" id="mmu:27276"/>
<dbReference type="UCSC" id="uc009ink.2">
    <molecule id="Q9QYE9-1"/>
    <property type="organism name" value="mouse"/>
</dbReference>
<dbReference type="UCSC" id="uc009ino.2">
    <molecule id="Q9QYE9-2"/>
    <property type="organism name" value="mouse"/>
</dbReference>
<dbReference type="AGR" id="MGI:1351469"/>
<dbReference type="CTD" id="58473"/>
<dbReference type="MGI" id="MGI:1351469">
    <property type="gene designation" value="Plekhb1"/>
</dbReference>
<dbReference type="VEuPathDB" id="HostDB:ENSMUSG00000030701"/>
<dbReference type="eggNOG" id="ENOG502RQ6P">
    <property type="taxonomic scope" value="Eukaryota"/>
</dbReference>
<dbReference type="GeneTree" id="ENSGT00390000013989"/>
<dbReference type="HOGENOM" id="CLU_102020_0_0_1"/>
<dbReference type="InParanoid" id="Q9QYE9"/>
<dbReference type="OMA" id="HFNVRDV"/>
<dbReference type="OrthoDB" id="2157866at2759"/>
<dbReference type="PhylomeDB" id="Q9QYE9"/>
<dbReference type="TreeFam" id="TF331787"/>
<dbReference type="BioGRID-ORCS" id="27276">
    <property type="hits" value="2 hits in 76 CRISPR screens"/>
</dbReference>
<dbReference type="ChiTaRS" id="Plekhb1">
    <property type="organism name" value="mouse"/>
</dbReference>
<dbReference type="EvolutionaryTrace" id="Q9QYE9"/>
<dbReference type="PRO" id="PR:Q9QYE9"/>
<dbReference type="Proteomes" id="UP000000589">
    <property type="component" value="Chromosome 7"/>
</dbReference>
<dbReference type="RNAct" id="Q9QYE9">
    <property type="molecule type" value="protein"/>
</dbReference>
<dbReference type="Bgee" id="ENSMUSG00000030701">
    <property type="expression patterns" value="Expressed in vestibular membrane of cochlear duct and 218 other cell types or tissues"/>
</dbReference>
<dbReference type="ExpressionAtlas" id="Q9QYE9">
    <property type="expression patterns" value="baseline and differential"/>
</dbReference>
<dbReference type="GO" id="GO:0005737">
    <property type="term" value="C:cytoplasm"/>
    <property type="evidence" value="ECO:0007669"/>
    <property type="project" value="UniProtKB-SubCell"/>
</dbReference>
<dbReference type="GO" id="GO:0016020">
    <property type="term" value="C:membrane"/>
    <property type="evidence" value="ECO:0000304"/>
    <property type="project" value="UniProtKB"/>
</dbReference>
<dbReference type="GO" id="GO:0001750">
    <property type="term" value="C:photoreceptor outer segment"/>
    <property type="evidence" value="ECO:0000304"/>
    <property type="project" value="UniProtKB"/>
</dbReference>
<dbReference type="GO" id="GO:0042803">
    <property type="term" value="F:protein homodimerization activity"/>
    <property type="evidence" value="ECO:0000353"/>
    <property type="project" value="UniProtKB"/>
</dbReference>
<dbReference type="CDD" id="cd13265">
    <property type="entry name" value="PH_evt"/>
    <property type="match status" value="1"/>
</dbReference>
<dbReference type="FunFam" id="2.30.29.30:FF:000073">
    <property type="entry name" value="Pleckstrin homology domain-containing family B member 2"/>
    <property type="match status" value="1"/>
</dbReference>
<dbReference type="Gene3D" id="2.30.29.30">
    <property type="entry name" value="Pleckstrin-homology domain (PH domain)/Phosphotyrosine-binding domain (PTB)"/>
    <property type="match status" value="1"/>
</dbReference>
<dbReference type="InterPro" id="IPR011993">
    <property type="entry name" value="PH-like_dom_sf"/>
</dbReference>
<dbReference type="InterPro" id="IPR001849">
    <property type="entry name" value="PH_domain"/>
</dbReference>
<dbReference type="InterPro" id="IPR039680">
    <property type="entry name" value="PLEKHB1/2"/>
</dbReference>
<dbReference type="PANTHER" id="PTHR14309">
    <property type="entry name" value="EXPRESSED PROTEIN"/>
    <property type="match status" value="1"/>
</dbReference>
<dbReference type="PANTHER" id="PTHR14309:SF7">
    <property type="entry name" value="PLECKSTRIN HOMOLOGY DOMAIN-CONTAINING FAMILY B MEMBER 1"/>
    <property type="match status" value="1"/>
</dbReference>
<dbReference type="Pfam" id="PF00169">
    <property type="entry name" value="PH"/>
    <property type="match status" value="1"/>
</dbReference>
<dbReference type="SMART" id="SM00233">
    <property type="entry name" value="PH"/>
    <property type="match status" value="1"/>
</dbReference>
<dbReference type="SUPFAM" id="SSF50729">
    <property type="entry name" value="PH domain-like"/>
    <property type="match status" value="1"/>
</dbReference>
<dbReference type="PROSITE" id="PS50003">
    <property type="entry name" value="PH_DOMAIN"/>
    <property type="match status" value="1"/>
</dbReference>
<proteinExistence type="evidence at protein level"/>
<sequence>MSPATPVPPDSILESPFEEMALVRGGWLWRQSSILRRWKRNWFALWLDGTLGYYHDETAQDEEDRVVIHFNVRDIKVGQECQDVQPPEGRSRDGLLTVNLREGSRLHLCAETRDDAIAWKTALMEANSTPAPAGATVPPRSRRVCPKVRCTTLSWNPCKVERRIWVRVYSPYQDYYEVVPPNAHEATYVRSYYGPPYAGPGVTHVIVREDPCYSSGAPLAMGMLAGAATGAALGSLMWSPCWF</sequence>
<accession>Q9QYE9</accession>
<accession>Q9QYB3</accession>
<accession>Q9QYB4</accession>
<accession>Q9QYD2</accession>
<accession>Q9QYD3</accession>
<reference key="1">
    <citation type="journal article" date="1999" name="J. Biol. Chem.">
        <title>PHR1 encodes an abundant, pleckstrin homology domain-containing integral membrane protein in the photoreceptor outer segments.</title>
        <authorList>
            <person name="Xu S."/>
            <person name="Ladak R."/>
            <person name="Swanson D.A."/>
            <person name="Soltyk A."/>
            <person name="Sun H."/>
            <person name="Ploder L."/>
            <person name="Vidgen D."/>
            <person name="Duncan A.M.V."/>
            <person name="Garami E."/>
            <person name="McInnes R.R."/>
            <person name="Valle D."/>
        </authorList>
    </citation>
    <scope>NUCLEOTIDE SEQUENCE [GENOMIC DNA / MRNA] (ISOFORMS 1; 2; 3 AND 4)</scope>
    <scope>TISSUE SPECIFICITY</scope>
    <source>
        <tissue>Brain</tissue>
        <tissue>Retina</tissue>
    </source>
</reference>
<reference key="2">
    <citation type="journal article" date="2005" name="Science">
        <title>The transcriptional landscape of the mammalian genome.</title>
        <authorList>
            <person name="Carninci P."/>
            <person name="Kasukawa T."/>
            <person name="Katayama S."/>
            <person name="Gough J."/>
            <person name="Frith M.C."/>
            <person name="Maeda N."/>
            <person name="Oyama R."/>
            <person name="Ravasi T."/>
            <person name="Lenhard B."/>
            <person name="Wells C."/>
            <person name="Kodzius R."/>
            <person name="Shimokawa K."/>
            <person name="Bajic V.B."/>
            <person name="Brenner S.E."/>
            <person name="Batalov S."/>
            <person name="Forrest A.R."/>
            <person name="Zavolan M."/>
            <person name="Davis M.J."/>
            <person name="Wilming L.G."/>
            <person name="Aidinis V."/>
            <person name="Allen J.E."/>
            <person name="Ambesi-Impiombato A."/>
            <person name="Apweiler R."/>
            <person name="Aturaliya R.N."/>
            <person name="Bailey T.L."/>
            <person name="Bansal M."/>
            <person name="Baxter L."/>
            <person name="Beisel K.W."/>
            <person name="Bersano T."/>
            <person name="Bono H."/>
            <person name="Chalk A.M."/>
            <person name="Chiu K.P."/>
            <person name="Choudhary V."/>
            <person name="Christoffels A."/>
            <person name="Clutterbuck D.R."/>
            <person name="Crowe M.L."/>
            <person name="Dalla E."/>
            <person name="Dalrymple B.P."/>
            <person name="de Bono B."/>
            <person name="Della Gatta G."/>
            <person name="di Bernardo D."/>
            <person name="Down T."/>
            <person name="Engstrom P."/>
            <person name="Fagiolini M."/>
            <person name="Faulkner G."/>
            <person name="Fletcher C.F."/>
            <person name="Fukushima T."/>
            <person name="Furuno M."/>
            <person name="Futaki S."/>
            <person name="Gariboldi M."/>
            <person name="Georgii-Hemming P."/>
            <person name="Gingeras T.R."/>
            <person name="Gojobori T."/>
            <person name="Green R.E."/>
            <person name="Gustincich S."/>
            <person name="Harbers M."/>
            <person name="Hayashi Y."/>
            <person name="Hensch T.K."/>
            <person name="Hirokawa N."/>
            <person name="Hill D."/>
            <person name="Huminiecki L."/>
            <person name="Iacono M."/>
            <person name="Ikeo K."/>
            <person name="Iwama A."/>
            <person name="Ishikawa T."/>
            <person name="Jakt M."/>
            <person name="Kanapin A."/>
            <person name="Katoh M."/>
            <person name="Kawasawa Y."/>
            <person name="Kelso J."/>
            <person name="Kitamura H."/>
            <person name="Kitano H."/>
            <person name="Kollias G."/>
            <person name="Krishnan S.P."/>
            <person name="Kruger A."/>
            <person name="Kummerfeld S.K."/>
            <person name="Kurochkin I.V."/>
            <person name="Lareau L.F."/>
            <person name="Lazarevic D."/>
            <person name="Lipovich L."/>
            <person name="Liu J."/>
            <person name="Liuni S."/>
            <person name="McWilliam S."/>
            <person name="Madan Babu M."/>
            <person name="Madera M."/>
            <person name="Marchionni L."/>
            <person name="Matsuda H."/>
            <person name="Matsuzawa S."/>
            <person name="Miki H."/>
            <person name="Mignone F."/>
            <person name="Miyake S."/>
            <person name="Morris K."/>
            <person name="Mottagui-Tabar S."/>
            <person name="Mulder N."/>
            <person name="Nakano N."/>
            <person name="Nakauchi H."/>
            <person name="Ng P."/>
            <person name="Nilsson R."/>
            <person name="Nishiguchi S."/>
            <person name="Nishikawa S."/>
            <person name="Nori F."/>
            <person name="Ohara O."/>
            <person name="Okazaki Y."/>
            <person name="Orlando V."/>
            <person name="Pang K.C."/>
            <person name="Pavan W.J."/>
            <person name="Pavesi G."/>
            <person name="Pesole G."/>
            <person name="Petrovsky N."/>
            <person name="Piazza S."/>
            <person name="Reed J."/>
            <person name="Reid J.F."/>
            <person name="Ring B.Z."/>
            <person name="Ringwald M."/>
            <person name="Rost B."/>
            <person name="Ruan Y."/>
            <person name="Salzberg S.L."/>
            <person name="Sandelin A."/>
            <person name="Schneider C."/>
            <person name="Schoenbach C."/>
            <person name="Sekiguchi K."/>
            <person name="Semple C.A."/>
            <person name="Seno S."/>
            <person name="Sessa L."/>
            <person name="Sheng Y."/>
            <person name="Shibata Y."/>
            <person name="Shimada H."/>
            <person name="Shimada K."/>
            <person name="Silva D."/>
            <person name="Sinclair B."/>
            <person name="Sperling S."/>
            <person name="Stupka E."/>
            <person name="Sugiura K."/>
            <person name="Sultana R."/>
            <person name="Takenaka Y."/>
            <person name="Taki K."/>
            <person name="Tammoja K."/>
            <person name="Tan S.L."/>
            <person name="Tang S."/>
            <person name="Taylor M.S."/>
            <person name="Tegner J."/>
            <person name="Teichmann S.A."/>
            <person name="Ueda H.R."/>
            <person name="van Nimwegen E."/>
            <person name="Verardo R."/>
            <person name="Wei C.L."/>
            <person name="Yagi K."/>
            <person name="Yamanishi H."/>
            <person name="Zabarovsky E."/>
            <person name="Zhu S."/>
            <person name="Zimmer A."/>
            <person name="Hide W."/>
            <person name="Bult C."/>
            <person name="Grimmond S.M."/>
            <person name="Teasdale R.D."/>
            <person name="Liu E.T."/>
            <person name="Brusic V."/>
            <person name="Quackenbush J."/>
            <person name="Wahlestedt C."/>
            <person name="Mattick J.S."/>
            <person name="Hume D.A."/>
            <person name="Kai C."/>
            <person name="Sasaki D."/>
            <person name="Tomaru Y."/>
            <person name="Fukuda S."/>
            <person name="Kanamori-Katayama M."/>
            <person name="Suzuki M."/>
            <person name="Aoki J."/>
            <person name="Arakawa T."/>
            <person name="Iida J."/>
            <person name="Imamura K."/>
            <person name="Itoh M."/>
            <person name="Kato T."/>
            <person name="Kawaji H."/>
            <person name="Kawagashira N."/>
            <person name="Kawashima T."/>
            <person name="Kojima M."/>
            <person name="Kondo S."/>
            <person name="Konno H."/>
            <person name="Nakano K."/>
            <person name="Ninomiya N."/>
            <person name="Nishio T."/>
            <person name="Okada M."/>
            <person name="Plessy C."/>
            <person name="Shibata K."/>
            <person name="Shiraki T."/>
            <person name="Suzuki S."/>
            <person name="Tagami M."/>
            <person name="Waki K."/>
            <person name="Watahiki A."/>
            <person name="Okamura-Oho Y."/>
            <person name="Suzuki H."/>
            <person name="Kawai J."/>
            <person name="Hayashizaki Y."/>
        </authorList>
    </citation>
    <scope>NUCLEOTIDE SEQUENCE [LARGE SCALE MRNA] (ISOFORM 4)</scope>
    <source>
        <strain>C57BL/6J</strain>
        <tissue>Cerebellum</tissue>
    </source>
</reference>
<reference key="3">
    <citation type="journal article" date="2004" name="Genome Res.">
        <title>The status, quality, and expansion of the NIH full-length cDNA project: the Mammalian Gene Collection (MGC).</title>
        <authorList>
            <consortium name="The MGC Project Team"/>
        </authorList>
    </citation>
    <scope>NUCLEOTIDE SEQUENCE [LARGE SCALE MRNA] (ISOFORM 1)</scope>
    <source>
        <tissue>Eye</tissue>
    </source>
</reference>
<reference key="4">
    <citation type="journal article" date="2005" name="J. Cell Sci.">
        <title>PHR1, an integral membrane protein of the inner ear sensory cells, directly interacts with myosin 1c and myosin VIIa.</title>
        <authorList>
            <person name="Etournay R."/>
            <person name="El-Amraoui A."/>
            <person name="Bahloul A."/>
            <person name="Blanchard S."/>
            <person name="Roux I."/>
            <person name="Pezeron G."/>
            <person name="Michalski N."/>
            <person name="Daviet L."/>
            <person name="Hardelin J.-P."/>
            <person name="Legrain P."/>
            <person name="Petit C."/>
        </authorList>
    </citation>
    <scope>INTERACTION WITH MYO1C AND MYO7A</scope>
    <scope>HOMODIMERIZATION</scope>
</reference>
<reference key="5">
    <citation type="journal article" date="2004" name="Mol. Cell. Biol.">
        <title>PHR1, a PH domain-containing protein expressed in primary sensory neurons.</title>
        <authorList>
            <person name="Xu S."/>
            <person name="Wang Y."/>
            <person name="Zhao H."/>
            <person name="Zhang L."/>
            <person name="Xiong W."/>
            <person name="Yau K.W."/>
            <person name="Hiel H."/>
            <person name="Glowatzki E."/>
            <person name="Ryugo D.K."/>
            <person name="Valle D."/>
        </authorList>
    </citation>
    <scope>TISSUE SPECIFICITY</scope>
    <scope>DISRUPTION PHENOTYPE</scope>
</reference>
<reference key="6">
    <citation type="journal article" date="2010" name="Cell">
        <title>A tissue-specific atlas of mouse protein phosphorylation and expression.</title>
        <authorList>
            <person name="Huttlin E.L."/>
            <person name="Jedrychowski M.P."/>
            <person name="Elias J.E."/>
            <person name="Goswami T."/>
            <person name="Rad R."/>
            <person name="Beausoleil S.A."/>
            <person name="Villen J."/>
            <person name="Haas W."/>
            <person name="Sowa M.E."/>
            <person name="Gygi S.P."/>
        </authorList>
    </citation>
    <scope>IDENTIFICATION BY MASS SPECTROMETRY [LARGE SCALE ANALYSIS]</scope>
    <source>
        <tissue>Brain</tissue>
    </source>
</reference>
<reference key="7">
    <citation type="journal article" date="2010" name="Laryngoscope">
        <title>PHR1 is a vesicle-bound protein abundantly expressed in mature olfactory neurons.</title>
        <authorList>
            <person name="Tan B."/>
            <person name="Brown D."/>
            <person name="Xu S."/>
            <person name="Valle D."/>
        </authorList>
    </citation>
    <scope>SUBCELLULAR LOCATION</scope>
    <scope>TISSUE SPECIFICITY</scope>
</reference>
<reference key="8">
    <citation type="submission" date="2006-06" db="PDB data bank">
        <title>Solution structure of the PH domain of pleckstrin homology domain-containing protein family B member 1 from mouse.</title>
        <authorList>
            <consortium name="RIKEN structural genomics initiative (RSGI)"/>
        </authorList>
    </citation>
    <scope>STRUCTURE BY NMR OF 22-138</scope>
</reference>
<protein>
    <recommendedName>
        <fullName>Pleckstrin homology domain-containing family B member 1</fullName>
        <shortName>PH domain-containing family B member 1</shortName>
    </recommendedName>
    <alternativeName>
        <fullName>Evectin-1</fullName>
    </alternativeName>
    <alternativeName>
        <fullName>PH domain-containing protein in retina 1</fullName>
        <shortName>PHRET1</shortName>
    </alternativeName>
    <alternativeName>
        <fullName>Pleckstrin homology domain retinal protein 1</fullName>
    </alternativeName>
</protein>
<gene>
    <name type="primary">Plekhb1</name>
    <name type="synonym">Evt1</name>
    <name type="synonym">Phr1</name>
</gene>
<comment type="subunit">
    <text evidence="1 5">Binds transducins (By similarity). Homodimer. Interacts (via PH domain) with MYO1C. Interacts (via PH domain) with MYO7A.</text>
</comment>
<comment type="interaction">
    <interactant intactId="EBI-1127141">
        <id>Q9QYE9-1</id>
    </interactant>
    <interactant intactId="EBI-777558">
        <id>Q9WTI7</id>
        <label>Myo1c</label>
    </interactant>
    <organismsDiffer>false</organismsDiffer>
    <experiments>4</experiments>
</comment>
<comment type="interaction">
    <interactant intactId="EBI-1127145">
        <id>Q9QYE9-2</id>
    </interactant>
    <interactant intactId="EBI-777558">
        <id>Q9WTI7</id>
        <label>Myo1c</label>
    </interactant>
    <organismsDiffer>false</organismsDiffer>
    <experiments>2</experiments>
</comment>
<comment type="subcellular location">
    <subcellularLocation>
        <location evidence="6">Membrane</location>
    </subcellularLocation>
    <subcellularLocation>
        <location evidence="6">Cytoplasm</location>
    </subcellularLocation>
    <text evidence="1">Membrane-associated. Highly expressed in the outer segments of photoreceptor cells, both in rods and cones (By similarity). Localizes to the apical juxta-nuclear Golgi region of the cytoplasm (PubMed:20301200).</text>
</comment>
<comment type="alternative products">
    <event type="alternative splicing"/>
    <isoform>
        <id>Q9QYE9-1</id>
        <name>1</name>
        <sequence type="displayed"/>
    </isoform>
    <isoform>
        <id>Q9QYE9-2</id>
        <name>2</name>
        <sequence type="described" ref="VSP_009782"/>
    </isoform>
    <isoform>
        <id>Q9QYE9-3</id>
        <name>3</name>
        <sequence type="described" ref="VSP_009781"/>
    </isoform>
    <isoform>
        <id>Q9QYE9-4</id>
        <name>4</name>
        <sequence type="described" ref="VSP_009781 VSP_009782"/>
    </isoform>
</comment>
<comment type="tissue specificity">
    <text evidence="3 4 6">Highly expressed in retina and brain. In retina, abundantly expressed in photoreceptors. Isoform 4 is the predominant isoform expressed in mature olfactory receptor neurons and vestibular and cochlear hair cells. Also expressed in cells with possible sensory function, including peripheral retinal ganglion cells, cochlear interdental cells, and neurons of the circumventricular organ (at protein level).</text>
</comment>
<comment type="disruption phenotype">
    <text evidence="4">Mice appear normal at birth with no obvious behavioral or growth abnormalities nor overt sensory deficits. At 6 months and 1 year of age, mice display normal retinal histology and normal response in electroretinograms.</text>
</comment>